<comment type="function">
    <text evidence="1">Part of the ABC transporter complex PstSACB involved in phosphate import. Responsible for energy coupling to the transport system.</text>
</comment>
<comment type="catalytic activity">
    <reaction evidence="1">
        <text>phosphate(out) + ATP + H2O = ADP + 2 phosphate(in) + H(+)</text>
        <dbReference type="Rhea" id="RHEA:24440"/>
        <dbReference type="ChEBI" id="CHEBI:15377"/>
        <dbReference type="ChEBI" id="CHEBI:15378"/>
        <dbReference type="ChEBI" id="CHEBI:30616"/>
        <dbReference type="ChEBI" id="CHEBI:43474"/>
        <dbReference type="ChEBI" id="CHEBI:456216"/>
        <dbReference type="EC" id="7.3.2.1"/>
    </reaction>
</comment>
<comment type="subunit">
    <text evidence="1">The complex is composed of two ATP-binding proteins (PstB), two transmembrane proteins (PstC and PstA) and a solute-binding protein (PstS).</text>
</comment>
<comment type="subcellular location">
    <subcellularLocation>
        <location evidence="1">Cell inner membrane</location>
        <topology evidence="1">Peripheral membrane protein</topology>
    </subcellularLocation>
</comment>
<comment type="similarity">
    <text evidence="1">Belongs to the ABC transporter superfamily. Phosphate importer (TC 3.A.1.7) family.</text>
</comment>
<evidence type="ECO:0000255" key="1">
    <source>
        <dbReference type="HAMAP-Rule" id="MF_01702"/>
    </source>
</evidence>
<proteinExistence type="inferred from homology"/>
<sequence>MNTAVVTNAAPKIAVKNLNFFYGKFHALRDISLEIPEHKVTAFIGPSGCGKSTLLRVFNRMFELYPEQRAEGEILLDGENLLTSKKDVALLRAKVGMVFQKPTPFPMSIFDNIAFGVKLFESLNTTDLEERVEWALRKAALWGEVKDKLTQSGSSLSGGQQQRLCIARGIAIKPEVLLLDEPCSALDPISTGKIEELITELKSDYTVVIVTHNMQQAARCSDYTAYMYLGDLMEFGATEQIFFKPTRKETEDYITGRFG</sequence>
<protein>
    <recommendedName>
        <fullName evidence="1">Phosphate import ATP-binding protein PstB</fullName>
        <ecNumber evidence="1">7.3.2.1</ecNumber>
    </recommendedName>
    <alternativeName>
        <fullName evidence="1">ABC phosphate transporter</fullName>
    </alternativeName>
    <alternativeName>
        <fullName evidence="1">Phosphate-transporting ATPase</fullName>
    </alternativeName>
</protein>
<organism>
    <name type="scientific">Albidiferax ferrireducens (strain ATCC BAA-621 / DSM 15236 / T118)</name>
    <name type="common">Rhodoferax ferrireducens</name>
    <dbReference type="NCBI Taxonomy" id="338969"/>
    <lineage>
        <taxon>Bacteria</taxon>
        <taxon>Pseudomonadati</taxon>
        <taxon>Pseudomonadota</taxon>
        <taxon>Betaproteobacteria</taxon>
        <taxon>Burkholderiales</taxon>
        <taxon>Comamonadaceae</taxon>
        <taxon>Rhodoferax</taxon>
    </lineage>
</organism>
<name>PSTB_ALBFT</name>
<keyword id="KW-0067">ATP-binding</keyword>
<keyword id="KW-0997">Cell inner membrane</keyword>
<keyword id="KW-1003">Cell membrane</keyword>
<keyword id="KW-0472">Membrane</keyword>
<keyword id="KW-0547">Nucleotide-binding</keyword>
<keyword id="KW-0592">Phosphate transport</keyword>
<keyword id="KW-1185">Reference proteome</keyword>
<keyword id="KW-1278">Translocase</keyword>
<keyword id="KW-0813">Transport</keyword>
<feature type="chain" id="PRO_0000272512" description="Phosphate import ATP-binding protein PstB">
    <location>
        <begin position="1"/>
        <end position="259"/>
    </location>
</feature>
<feature type="domain" description="ABC transporter" evidence="1">
    <location>
        <begin position="13"/>
        <end position="254"/>
    </location>
</feature>
<feature type="binding site" evidence="1">
    <location>
        <begin position="45"/>
        <end position="52"/>
    </location>
    <ligand>
        <name>ATP</name>
        <dbReference type="ChEBI" id="CHEBI:30616"/>
    </ligand>
</feature>
<accession>Q221H2</accession>
<gene>
    <name evidence="1" type="primary">pstB</name>
    <name type="ordered locus">Rfer_0580</name>
</gene>
<reference key="1">
    <citation type="submission" date="2006-02" db="EMBL/GenBank/DDBJ databases">
        <title>Complete sequence of chromosome of Rhodoferax ferrireducens DSM 15236.</title>
        <authorList>
            <person name="Copeland A."/>
            <person name="Lucas S."/>
            <person name="Lapidus A."/>
            <person name="Barry K."/>
            <person name="Detter J.C."/>
            <person name="Glavina del Rio T."/>
            <person name="Hammon N."/>
            <person name="Israni S."/>
            <person name="Pitluck S."/>
            <person name="Brettin T."/>
            <person name="Bruce D."/>
            <person name="Han C."/>
            <person name="Tapia R."/>
            <person name="Gilna P."/>
            <person name="Kiss H."/>
            <person name="Schmutz J."/>
            <person name="Larimer F."/>
            <person name="Land M."/>
            <person name="Kyrpides N."/>
            <person name="Ivanova N."/>
            <person name="Richardson P."/>
        </authorList>
    </citation>
    <scope>NUCLEOTIDE SEQUENCE [LARGE SCALE GENOMIC DNA]</scope>
    <source>
        <strain>ATCC BAA-621 / DSM 15236 / T118</strain>
    </source>
</reference>
<dbReference type="EC" id="7.3.2.1" evidence="1"/>
<dbReference type="EMBL" id="CP000267">
    <property type="protein sequence ID" value="ABD68331.1"/>
    <property type="molecule type" value="Genomic_DNA"/>
</dbReference>
<dbReference type="RefSeq" id="WP_011462904.1">
    <property type="nucleotide sequence ID" value="NC_007908.1"/>
</dbReference>
<dbReference type="SMR" id="Q221H2"/>
<dbReference type="STRING" id="338969.Rfer_0580"/>
<dbReference type="KEGG" id="rfr:Rfer_0580"/>
<dbReference type="eggNOG" id="COG1117">
    <property type="taxonomic scope" value="Bacteria"/>
</dbReference>
<dbReference type="HOGENOM" id="CLU_000604_1_22_4"/>
<dbReference type="OrthoDB" id="9802264at2"/>
<dbReference type="Proteomes" id="UP000008332">
    <property type="component" value="Chromosome"/>
</dbReference>
<dbReference type="GO" id="GO:0005886">
    <property type="term" value="C:plasma membrane"/>
    <property type="evidence" value="ECO:0007669"/>
    <property type="project" value="UniProtKB-SubCell"/>
</dbReference>
<dbReference type="GO" id="GO:0005524">
    <property type="term" value="F:ATP binding"/>
    <property type="evidence" value="ECO:0007669"/>
    <property type="project" value="UniProtKB-KW"/>
</dbReference>
<dbReference type="GO" id="GO:0016887">
    <property type="term" value="F:ATP hydrolysis activity"/>
    <property type="evidence" value="ECO:0007669"/>
    <property type="project" value="InterPro"/>
</dbReference>
<dbReference type="GO" id="GO:0015415">
    <property type="term" value="F:ATPase-coupled phosphate ion transmembrane transporter activity"/>
    <property type="evidence" value="ECO:0007669"/>
    <property type="project" value="UniProtKB-EC"/>
</dbReference>
<dbReference type="GO" id="GO:0035435">
    <property type="term" value="P:phosphate ion transmembrane transport"/>
    <property type="evidence" value="ECO:0007669"/>
    <property type="project" value="InterPro"/>
</dbReference>
<dbReference type="CDD" id="cd03260">
    <property type="entry name" value="ABC_PstB_phosphate_transporter"/>
    <property type="match status" value="1"/>
</dbReference>
<dbReference type="FunFam" id="3.40.50.300:FF:000132">
    <property type="entry name" value="Phosphate import ATP-binding protein PstB"/>
    <property type="match status" value="1"/>
</dbReference>
<dbReference type="Gene3D" id="3.40.50.300">
    <property type="entry name" value="P-loop containing nucleotide triphosphate hydrolases"/>
    <property type="match status" value="1"/>
</dbReference>
<dbReference type="InterPro" id="IPR003593">
    <property type="entry name" value="AAA+_ATPase"/>
</dbReference>
<dbReference type="InterPro" id="IPR003439">
    <property type="entry name" value="ABC_transporter-like_ATP-bd"/>
</dbReference>
<dbReference type="InterPro" id="IPR017871">
    <property type="entry name" value="ABC_transporter-like_CS"/>
</dbReference>
<dbReference type="InterPro" id="IPR027417">
    <property type="entry name" value="P-loop_NTPase"/>
</dbReference>
<dbReference type="InterPro" id="IPR005670">
    <property type="entry name" value="PstB-like"/>
</dbReference>
<dbReference type="NCBIfam" id="TIGR00972">
    <property type="entry name" value="3a0107s01c2"/>
    <property type="match status" value="1"/>
</dbReference>
<dbReference type="PANTHER" id="PTHR43423">
    <property type="entry name" value="ABC TRANSPORTER I FAMILY MEMBER 17"/>
    <property type="match status" value="1"/>
</dbReference>
<dbReference type="PANTHER" id="PTHR43423:SF3">
    <property type="entry name" value="PHOSPHATE IMPORT ATP-BINDING PROTEIN PSTB"/>
    <property type="match status" value="1"/>
</dbReference>
<dbReference type="Pfam" id="PF00005">
    <property type="entry name" value="ABC_tran"/>
    <property type="match status" value="1"/>
</dbReference>
<dbReference type="SMART" id="SM00382">
    <property type="entry name" value="AAA"/>
    <property type="match status" value="1"/>
</dbReference>
<dbReference type="SUPFAM" id="SSF52540">
    <property type="entry name" value="P-loop containing nucleoside triphosphate hydrolases"/>
    <property type="match status" value="1"/>
</dbReference>
<dbReference type="PROSITE" id="PS00211">
    <property type="entry name" value="ABC_TRANSPORTER_1"/>
    <property type="match status" value="1"/>
</dbReference>
<dbReference type="PROSITE" id="PS50893">
    <property type="entry name" value="ABC_TRANSPORTER_2"/>
    <property type="match status" value="1"/>
</dbReference>
<dbReference type="PROSITE" id="PS51238">
    <property type="entry name" value="PSTB"/>
    <property type="match status" value="1"/>
</dbReference>